<name>RMR1_YEAST</name>
<accession>P53060</accession>
<accession>D6VV85</accession>
<dbReference type="EMBL" id="X94357">
    <property type="protein sequence ID" value="CAA64137.1"/>
    <property type="status" value="ALT_INIT"/>
    <property type="molecule type" value="Genomic_DNA"/>
</dbReference>
<dbReference type="EMBL" id="Z72772">
    <property type="protein sequence ID" value="CAA96970.1"/>
    <property type="status" value="ALT_INIT"/>
    <property type="molecule type" value="Genomic_DNA"/>
</dbReference>
<dbReference type="EMBL" id="BK006941">
    <property type="protein sequence ID" value="DAA07869.1"/>
    <property type="molecule type" value="Genomic_DNA"/>
</dbReference>
<dbReference type="PIR" id="S61611">
    <property type="entry name" value="S61611"/>
</dbReference>
<dbReference type="RefSeq" id="NP_011264.2">
    <property type="nucleotide sequence ID" value="NM_001181116.1"/>
</dbReference>
<dbReference type="BioGRID" id="33029">
    <property type="interactions" value="174"/>
</dbReference>
<dbReference type="DIP" id="DIP-4375N"/>
<dbReference type="FunCoup" id="P53060">
    <property type="interactions" value="70"/>
</dbReference>
<dbReference type="IntAct" id="P53060">
    <property type="interactions" value="7"/>
</dbReference>
<dbReference type="MINT" id="P53060"/>
<dbReference type="STRING" id="4932.YGL250W"/>
<dbReference type="iPTMnet" id="P53060"/>
<dbReference type="PaxDb" id="4932-YGL250W"/>
<dbReference type="PeptideAtlas" id="P53060"/>
<dbReference type="EnsemblFungi" id="YGL250W_mRNA">
    <property type="protein sequence ID" value="YGL250W"/>
    <property type="gene ID" value="YGL250W"/>
</dbReference>
<dbReference type="GeneID" id="852642"/>
<dbReference type="KEGG" id="sce:YGL250W"/>
<dbReference type="AGR" id="SGD:S000003219"/>
<dbReference type="SGD" id="S000003219">
    <property type="gene designation" value="RMR1"/>
</dbReference>
<dbReference type="VEuPathDB" id="FungiDB:YGL250W"/>
<dbReference type="eggNOG" id="ENOG502RZ15">
    <property type="taxonomic scope" value="Eukaryota"/>
</dbReference>
<dbReference type="HOGENOM" id="CLU_065860_0_0_1"/>
<dbReference type="InParanoid" id="P53060"/>
<dbReference type="OMA" id="FSNDETH"/>
<dbReference type="OrthoDB" id="2507795at2759"/>
<dbReference type="BioCyc" id="YEAST:G3O-30720-MONOMER"/>
<dbReference type="BioGRID-ORCS" id="852642">
    <property type="hits" value="0 hits in 10 CRISPR screens"/>
</dbReference>
<dbReference type="PRO" id="PR:P53060"/>
<dbReference type="Proteomes" id="UP000002311">
    <property type="component" value="Chromosome VII"/>
</dbReference>
<dbReference type="RNAct" id="P53060">
    <property type="molecule type" value="protein"/>
</dbReference>
<dbReference type="GO" id="GO:0005737">
    <property type="term" value="C:cytoplasm"/>
    <property type="evidence" value="ECO:0007005"/>
    <property type="project" value="SGD"/>
</dbReference>
<dbReference type="GO" id="GO:0005634">
    <property type="term" value="C:nucleus"/>
    <property type="evidence" value="ECO:0007005"/>
    <property type="project" value="SGD"/>
</dbReference>
<dbReference type="GO" id="GO:0006311">
    <property type="term" value="P:meiotic gene conversion"/>
    <property type="evidence" value="ECO:0000315"/>
    <property type="project" value="SGD"/>
</dbReference>
<dbReference type="GO" id="GO:0007131">
    <property type="term" value="P:reciprocal meiotic recombination"/>
    <property type="evidence" value="ECO:0000315"/>
    <property type="project" value="SGD"/>
</dbReference>
<dbReference type="InterPro" id="IPR018822">
    <property type="entry name" value="UPF0646"/>
</dbReference>
<dbReference type="Pfam" id="PF10336">
    <property type="entry name" value="DUF2420"/>
    <property type="match status" value="1"/>
</dbReference>
<proteinExistence type="evidence at protein level"/>
<organism>
    <name type="scientific">Saccharomyces cerevisiae (strain ATCC 204508 / S288c)</name>
    <name type="common">Baker's yeast</name>
    <dbReference type="NCBI Taxonomy" id="559292"/>
    <lineage>
        <taxon>Eukaryota</taxon>
        <taxon>Fungi</taxon>
        <taxon>Dikarya</taxon>
        <taxon>Ascomycota</taxon>
        <taxon>Saccharomycotina</taxon>
        <taxon>Saccharomycetes</taxon>
        <taxon>Saccharomycetales</taxon>
        <taxon>Saccharomycetaceae</taxon>
        <taxon>Saccharomyces</taxon>
    </lineage>
</organism>
<sequence length="241" mass="27709">MSEEEAHKTVEVDDVGVQLDEGDEEDLLEYDDELVEEQPSDARIRNVAETLMKSELPKVTVEYKDTTFLLFTSDDKNESNNPIICENAALYQRPMGEFMESIRKFMGNRFGRLAFATKELVLQLKSLDLTLFEDNVYNNHISFSDVYTIFKILKERSESNFETDIPTHLAIELSTRPRFVSRYNALVELTESSATLKNIKPFSNDETHPLIVDDNDQYTHQNTSEVIVMDIDDDVGEDSED</sequence>
<comment type="function">
    <text evidence="4">Required for normal levels of gene conversion events during meiosis.</text>
</comment>
<comment type="subcellular location">
    <subcellularLocation>
        <location evidence="1">Cytoplasm</location>
    </subcellularLocation>
    <subcellularLocation>
        <location evidence="1">Nucleus</location>
    </subcellularLocation>
</comment>
<comment type="PTM">
    <text evidence="3">Sumoylated.</text>
</comment>
<comment type="miscellaneous">
    <text evidence="2">Present with 1820 molecules/cell in log phase SD medium.</text>
</comment>
<comment type="similarity">
    <text evidence="5">Belongs to the RMR1 family.</text>
</comment>
<comment type="sequence caution" evidence="5">
    <conflict type="erroneous initiation">
        <sequence resource="EMBL-CDS" id="CAA64137"/>
    </conflict>
    <text>Extended N-terminus.</text>
</comment>
<comment type="sequence caution" evidence="5">
    <conflict type="erroneous initiation">
        <sequence resource="EMBL-CDS" id="CAA96970"/>
    </conflict>
    <text>Extended N-terminus.</text>
</comment>
<gene>
    <name type="primary">RMR1</name>
    <name type="ordered locus">YGL250W</name>
    <name type="ORF">NRC245</name>
</gene>
<evidence type="ECO:0000269" key="1">
    <source>
    </source>
</evidence>
<evidence type="ECO:0000269" key="2">
    <source>
    </source>
</evidence>
<evidence type="ECO:0000269" key="3">
    <source>
    </source>
</evidence>
<evidence type="ECO:0000269" key="4">
    <source>
    </source>
</evidence>
<evidence type="ECO:0000305" key="5"/>
<reference key="1">
    <citation type="journal article" date="1996" name="Yeast">
        <title>Sequence of a 39,411 bp DNA fragment covering the left end of chromosome VII of Saccharomyces cerevisiae.</title>
        <authorList>
            <person name="Coissac E."/>
            <person name="Maillier E."/>
            <person name="Robineau S."/>
            <person name="Netter P."/>
        </authorList>
    </citation>
    <scope>NUCLEOTIDE SEQUENCE [GENOMIC DNA]</scope>
    <source>
        <strain>ATCC 96604 / S288c / FY1679</strain>
    </source>
</reference>
<reference key="2">
    <citation type="journal article" date="1997" name="Nature">
        <title>The nucleotide sequence of Saccharomyces cerevisiae chromosome VII.</title>
        <authorList>
            <person name="Tettelin H."/>
            <person name="Agostoni-Carbone M.L."/>
            <person name="Albermann K."/>
            <person name="Albers M."/>
            <person name="Arroyo J."/>
            <person name="Backes U."/>
            <person name="Barreiros T."/>
            <person name="Bertani I."/>
            <person name="Bjourson A.J."/>
            <person name="Brueckner M."/>
            <person name="Bruschi C.V."/>
            <person name="Carignani G."/>
            <person name="Castagnoli L."/>
            <person name="Cerdan E."/>
            <person name="Clemente M.L."/>
            <person name="Coblenz A."/>
            <person name="Coglievina M."/>
            <person name="Coissac E."/>
            <person name="Defoor E."/>
            <person name="Del Bino S."/>
            <person name="Delius H."/>
            <person name="Delneri D."/>
            <person name="de Wergifosse P."/>
            <person name="Dujon B."/>
            <person name="Durand P."/>
            <person name="Entian K.-D."/>
            <person name="Eraso P."/>
            <person name="Escribano V."/>
            <person name="Fabiani L."/>
            <person name="Fartmann B."/>
            <person name="Feroli F."/>
            <person name="Feuermann M."/>
            <person name="Frontali L."/>
            <person name="Garcia-Gonzalez M."/>
            <person name="Garcia-Saez M.I."/>
            <person name="Goffeau A."/>
            <person name="Guerreiro P."/>
            <person name="Hani J."/>
            <person name="Hansen M."/>
            <person name="Hebling U."/>
            <person name="Hernandez K."/>
            <person name="Heumann K."/>
            <person name="Hilger F."/>
            <person name="Hofmann B."/>
            <person name="Indge K.J."/>
            <person name="James C.M."/>
            <person name="Klima R."/>
            <person name="Koetter P."/>
            <person name="Kramer B."/>
            <person name="Kramer W."/>
            <person name="Lauquin G."/>
            <person name="Leuther H."/>
            <person name="Louis E.J."/>
            <person name="Maillier E."/>
            <person name="Marconi A."/>
            <person name="Martegani E."/>
            <person name="Mazon M.J."/>
            <person name="Mazzoni C."/>
            <person name="McReynolds A.D.K."/>
            <person name="Melchioretto P."/>
            <person name="Mewes H.-W."/>
            <person name="Minenkova O."/>
            <person name="Mueller-Auer S."/>
            <person name="Nawrocki A."/>
            <person name="Netter P."/>
            <person name="Neu R."/>
            <person name="Nombela C."/>
            <person name="Oliver S.G."/>
            <person name="Panzeri L."/>
            <person name="Paoluzi S."/>
            <person name="Plevani P."/>
            <person name="Portetelle D."/>
            <person name="Portillo F."/>
            <person name="Potier S."/>
            <person name="Purnelle B."/>
            <person name="Rieger M."/>
            <person name="Riles L."/>
            <person name="Rinaldi T."/>
            <person name="Robben J."/>
            <person name="Rodrigues-Pousada C."/>
            <person name="Rodriguez-Belmonte E."/>
            <person name="Rodriguez-Torres A.M."/>
            <person name="Rose M."/>
            <person name="Ruzzi M."/>
            <person name="Saliola M."/>
            <person name="Sanchez-Perez M."/>
            <person name="Schaefer B."/>
            <person name="Schaefer M."/>
            <person name="Scharfe M."/>
            <person name="Schmidheini T."/>
            <person name="Schreer A."/>
            <person name="Skala J."/>
            <person name="Souciet J.-L."/>
            <person name="Steensma H.Y."/>
            <person name="Talla E."/>
            <person name="Thierry A."/>
            <person name="Vandenbol M."/>
            <person name="van der Aart Q.J.M."/>
            <person name="Van Dyck L."/>
            <person name="Vanoni M."/>
            <person name="Verhasselt P."/>
            <person name="Voet M."/>
            <person name="Volckaert G."/>
            <person name="Wambutt R."/>
            <person name="Watson M.D."/>
            <person name="Weber N."/>
            <person name="Wedler E."/>
            <person name="Wedler H."/>
            <person name="Wipfli P."/>
            <person name="Wolf K."/>
            <person name="Wright L.F."/>
            <person name="Zaccaria P."/>
            <person name="Zimmermann M."/>
            <person name="Zollner A."/>
            <person name="Kleine K."/>
        </authorList>
    </citation>
    <scope>NUCLEOTIDE SEQUENCE [LARGE SCALE GENOMIC DNA]</scope>
    <source>
        <strain>ATCC 204508 / S288c</strain>
    </source>
</reference>
<reference key="3">
    <citation type="journal article" date="2014" name="G3 (Bethesda)">
        <title>The reference genome sequence of Saccharomyces cerevisiae: Then and now.</title>
        <authorList>
            <person name="Engel S.R."/>
            <person name="Dietrich F.S."/>
            <person name="Fisk D.G."/>
            <person name="Binkley G."/>
            <person name="Balakrishnan R."/>
            <person name="Costanzo M.C."/>
            <person name="Dwight S.S."/>
            <person name="Hitz B.C."/>
            <person name="Karra K."/>
            <person name="Nash R.S."/>
            <person name="Weng S."/>
            <person name="Wong E.D."/>
            <person name="Lloyd P."/>
            <person name="Skrzypek M.S."/>
            <person name="Miyasato S.R."/>
            <person name="Simison M."/>
            <person name="Cherry J.M."/>
        </authorList>
    </citation>
    <scope>GENOME REANNOTATION</scope>
    <source>
        <strain>ATCC 204508 / S288c</strain>
    </source>
</reference>
<reference key="4">
    <citation type="journal article" date="2003" name="Nature">
        <title>Sequencing and comparison of yeast species to identify genes and regulatory elements.</title>
        <authorList>
            <person name="Kellis M."/>
            <person name="Patterson N."/>
            <person name="Endrizzi M."/>
            <person name="Birren B.W."/>
            <person name="Lander E.S."/>
        </authorList>
    </citation>
    <scope>IDENTIFICATION OF PROBABLE INITIATION SITE</scope>
</reference>
<reference key="5">
    <citation type="journal article" date="2003" name="Nature">
        <title>Global analysis of protein localization in budding yeast.</title>
        <authorList>
            <person name="Huh W.-K."/>
            <person name="Falvo J.V."/>
            <person name="Gerke L.C."/>
            <person name="Carroll A.S."/>
            <person name="Howson R.W."/>
            <person name="Weissman J.S."/>
            <person name="O'Shea E.K."/>
        </authorList>
    </citation>
    <scope>SUBCELLULAR LOCATION [LARGE SCALE ANALYSIS]</scope>
</reference>
<reference key="6">
    <citation type="journal article" date="2003" name="Nature">
        <title>Global analysis of protein expression in yeast.</title>
        <authorList>
            <person name="Ghaemmaghami S."/>
            <person name="Huh W.-K."/>
            <person name="Bower K."/>
            <person name="Howson R.W."/>
            <person name="Belle A."/>
            <person name="Dephoure N."/>
            <person name="O'Shea E.K."/>
            <person name="Weissman J.S."/>
        </authorList>
    </citation>
    <scope>LEVEL OF PROTEIN EXPRESSION [LARGE SCALE ANALYSIS]</scope>
</reference>
<reference key="7">
    <citation type="journal article" date="2005" name="J. Biol. Chem.">
        <title>Defining the SUMO-modified proteome by multiple approaches in Saccharomyces cerevisiae.</title>
        <authorList>
            <person name="Hannich J.T."/>
            <person name="Lewis A."/>
            <person name="Kroetz M.B."/>
            <person name="Li S.J."/>
            <person name="Heide H."/>
            <person name="Emili A."/>
            <person name="Hochstrasser M."/>
        </authorList>
    </citation>
    <scope>SUMOYLATION</scope>
</reference>
<reference key="8">
    <citation type="journal article" date="2007" name="PLoS Genet.">
        <title>Novel roles for selected genes in meiotic DNA processing.</title>
        <authorList>
            <person name="Jordan P.W."/>
            <person name="Klein F."/>
            <person name="Leach D.R."/>
        </authorList>
    </citation>
    <scope>FUNCTION</scope>
</reference>
<keyword id="KW-0963">Cytoplasm</keyword>
<keyword id="KW-0469">Meiosis</keyword>
<keyword id="KW-0539">Nucleus</keyword>
<keyword id="KW-1185">Reference proteome</keyword>
<keyword id="KW-0832">Ubl conjugation</keyword>
<feature type="chain" id="PRO_0000202705" description="Reduced meiotic recombination protein 1">
    <location>
        <begin position="1"/>
        <end position="241"/>
    </location>
</feature>
<protein>
    <recommendedName>
        <fullName>Reduced meiotic recombination protein 1</fullName>
    </recommendedName>
</protein>